<sequence>MSAPLKRTPLAEEHLAAGARMVDFGGWDMPLAYGSQLEEHHAVRQDAGMFDVSHMLNVDVGGADATAFLRRLVANDVARLATPGRALYSCMLNPQGGIIDDLIIYYFAPDQWRVVVNAGTADKDIAWMQRVAAADGFDVAIAPRRDLAMVAVQGPNARAKVWAARPAWQAASEPLAPFSAAAVEAGTLVARTGYTGEDGFEIVLPADAVVQLWRDLLAQGVRPCGLGARDTLRLEAGMNLYGQDMDELVHPDQAGLSWTVALKDEARRFVGRDAIEQFAVPRAFVGLKLQERGVMRAHMPVRCAQGMGELTSGTMSPTLGVSVGFARVPVGVQPGDAVEVEIRGKWVPALVCKLPFVRHGKAVEHS</sequence>
<gene>
    <name evidence="1" type="primary">gcvT</name>
    <name type="ordered locus">BPP0769</name>
</gene>
<protein>
    <recommendedName>
        <fullName evidence="1">Aminomethyltransferase</fullName>
        <ecNumber evidence="1">2.1.2.10</ecNumber>
    </recommendedName>
    <alternativeName>
        <fullName evidence="1">Glycine cleavage system T protein</fullName>
    </alternativeName>
</protein>
<reference key="1">
    <citation type="journal article" date="2003" name="Nat. Genet.">
        <title>Comparative analysis of the genome sequences of Bordetella pertussis, Bordetella parapertussis and Bordetella bronchiseptica.</title>
        <authorList>
            <person name="Parkhill J."/>
            <person name="Sebaihia M."/>
            <person name="Preston A."/>
            <person name="Murphy L.D."/>
            <person name="Thomson N.R."/>
            <person name="Harris D.E."/>
            <person name="Holden M.T.G."/>
            <person name="Churcher C.M."/>
            <person name="Bentley S.D."/>
            <person name="Mungall K.L."/>
            <person name="Cerdeno-Tarraga A.-M."/>
            <person name="Temple L."/>
            <person name="James K.D."/>
            <person name="Harris B."/>
            <person name="Quail M.A."/>
            <person name="Achtman M."/>
            <person name="Atkin R."/>
            <person name="Baker S."/>
            <person name="Basham D."/>
            <person name="Bason N."/>
            <person name="Cherevach I."/>
            <person name="Chillingworth T."/>
            <person name="Collins M."/>
            <person name="Cronin A."/>
            <person name="Davis P."/>
            <person name="Doggett J."/>
            <person name="Feltwell T."/>
            <person name="Goble A."/>
            <person name="Hamlin N."/>
            <person name="Hauser H."/>
            <person name="Holroyd S."/>
            <person name="Jagels K."/>
            <person name="Leather S."/>
            <person name="Moule S."/>
            <person name="Norberczak H."/>
            <person name="O'Neil S."/>
            <person name="Ormond D."/>
            <person name="Price C."/>
            <person name="Rabbinowitsch E."/>
            <person name="Rutter S."/>
            <person name="Sanders M."/>
            <person name="Saunders D."/>
            <person name="Seeger K."/>
            <person name="Sharp S."/>
            <person name="Simmonds M."/>
            <person name="Skelton J."/>
            <person name="Squares R."/>
            <person name="Squares S."/>
            <person name="Stevens K."/>
            <person name="Unwin L."/>
            <person name="Whitehead S."/>
            <person name="Barrell B.G."/>
            <person name="Maskell D.J."/>
        </authorList>
    </citation>
    <scope>NUCLEOTIDE SEQUENCE [LARGE SCALE GENOMIC DNA]</scope>
    <source>
        <strain>12822 / ATCC BAA-587 / NCTC 13253</strain>
    </source>
</reference>
<evidence type="ECO:0000255" key="1">
    <source>
        <dbReference type="HAMAP-Rule" id="MF_00259"/>
    </source>
</evidence>
<proteinExistence type="inferred from homology"/>
<feature type="chain" id="PRO_0000122547" description="Aminomethyltransferase">
    <location>
        <begin position="1"/>
        <end position="366"/>
    </location>
</feature>
<name>GCST_BORPA</name>
<accession>Q7W1C6</accession>
<dbReference type="EC" id="2.1.2.10" evidence="1"/>
<dbReference type="EMBL" id="BX640425">
    <property type="protein sequence ID" value="CAE40178.1"/>
    <property type="molecule type" value="Genomic_DNA"/>
</dbReference>
<dbReference type="RefSeq" id="WP_010927673.1">
    <property type="nucleotide sequence ID" value="NC_002928.3"/>
</dbReference>
<dbReference type="SMR" id="Q7W1C6"/>
<dbReference type="GeneID" id="93202519"/>
<dbReference type="KEGG" id="bpa:BPP0769"/>
<dbReference type="HOGENOM" id="CLU_007884_10_2_4"/>
<dbReference type="Proteomes" id="UP000001421">
    <property type="component" value="Chromosome"/>
</dbReference>
<dbReference type="GO" id="GO:0005829">
    <property type="term" value="C:cytosol"/>
    <property type="evidence" value="ECO:0007669"/>
    <property type="project" value="TreeGrafter"/>
</dbReference>
<dbReference type="GO" id="GO:0005960">
    <property type="term" value="C:glycine cleavage complex"/>
    <property type="evidence" value="ECO:0007669"/>
    <property type="project" value="InterPro"/>
</dbReference>
<dbReference type="GO" id="GO:0004047">
    <property type="term" value="F:aminomethyltransferase activity"/>
    <property type="evidence" value="ECO:0007669"/>
    <property type="project" value="UniProtKB-UniRule"/>
</dbReference>
<dbReference type="GO" id="GO:0008483">
    <property type="term" value="F:transaminase activity"/>
    <property type="evidence" value="ECO:0007669"/>
    <property type="project" value="UniProtKB-KW"/>
</dbReference>
<dbReference type="GO" id="GO:0019464">
    <property type="term" value="P:glycine decarboxylation via glycine cleavage system"/>
    <property type="evidence" value="ECO:0007669"/>
    <property type="project" value="UniProtKB-UniRule"/>
</dbReference>
<dbReference type="FunFam" id="3.30.70.1400:FF:000001">
    <property type="entry name" value="Aminomethyltransferase"/>
    <property type="match status" value="1"/>
</dbReference>
<dbReference type="Gene3D" id="2.40.30.110">
    <property type="entry name" value="Aminomethyltransferase beta-barrel domains"/>
    <property type="match status" value="1"/>
</dbReference>
<dbReference type="Gene3D" id="3.30.70.1400">
    <property type="entry name" value="Aminomethyltransferase beta-barrel domains"/>
    <property type="match status" value="1"/>
</dbReference>
<dbReference type="Gene3D" id="4.10.1250.10">
    <property type="entry name" value="Aminomethyltransferase fragment"/>
    <property type="match status" value="1"/>
</dbReference>
<dbReference type="Gene3D" id="3.30.1360.120">
    <property type="entry name" value="Probable tRNA modification gtpase trme, domain 1"/>
    <property type="match status" value="1"/>
</dbReference>
<dbReference type="HAMAP" id="MF_00259">
    <property type="entry name" value="GcvT"/>
    <property type="match status" value="1"/>
</dbReference>
<dbReference type="InterPro" id="IPR006223">
    <property type="entry name" value="GCS_T"/>
</dbReference>
<dbReference type="InterPro" id="IPR022903">
    <property type="entry name" value="GCS_T_bac"/>
</dbReference>
<dbReference type="InterPro" id="IPR013977">
    <property type="entry name" value="GCST_C"/>
</dbReference>
<dbReference type="InterPro" id="IPR006222">
    <property type="entry name" value="GCV_T_N"/>
</dbReference>
<dbReference type="InterPro" id="IPR028896">
    <property type="entry name" value="GcvT/YgfZ/DmdA"/>
</dbReference>
<dbReference type="InterPro" id="IPR029043">
    <property type="entry name" value="GcvT/YgfZ_C"/>
</dbReference>
<dbReference type="InterPro" id="IPR027266">
    <property type="entry name" value="TrmE/GcvT_dom1"/>
</dbReference>
<dbReference type="NCBIfam" id="TIGR00528">
    <property type="entry name" value="gcvT"/>
    <property type="match status" value="1"/>
</dbReference>
<dbReference type="NCBIfam" id="NF001567">
    <property type="entry name" value="PRK00389.1"/>
    <property type="match status" value="1"/>
</dbReference>
<dbReference type="PANTHER" id="PTHR43757">
    <property type="entry name" value="AMINOMETHYLTRANSFERASE"/>
    <property type="match status" value="1"/>
</dbReference>
<dbReference type="PANTHER" id="PTHR43757:SF2">
    <property type="entry name" value="AMINOMETHYLTRANSFERASE, MITOCHONDRIAL"/>
    <property type="match status" value="1"/>
</dbReference>
<dbReference type="Pfam" id="PF01571">
    <property type="entry name" value="GCV_T"/>
    <property type="match status" value="1"/>
</dbReference>
<dbReference type="Pfam" id="PF08669">
    <property type="entry name" value="GCV_T_C"/>
    <property type="match status" value="1"/>
</dbReference>
<dbReference type="PIRSF" id="PIRSF006487">
    <property type="entry name" value="GcvT"/>
    <property type="match status" value="1"/>
</dbReference>
<dbReference type="SUPFAM" id="SSF101790">
    <property type="entry name" value="Aminomethyltransferase beta-barrel domain"/>
    <property type="match status" value="1"/>
</dbReference>
<dbReference type="SUPFAM" id="SSF103025">
    <property type="entry name" value="Folate-binding domain"/>
    <property type="match status" value="1"/>
</dbReference>
<organism>
    <name type="scientific">Bordetella parapertussis (strain 12822 / ATCC BAA-587 / NCTC 13253)</name>
    <dbReference type="NCBI Taxonomy" id="257311"/>
    <lineage>
        <taxon>Bacteria</taxon>
        <taxon>Pseudomonadati</taxon>
        <taxon>Pseudomonadota</taxon>
        <taxon>Betaproteobacteria</taxon>
        <taxon>Burkholderiales</taxon>
        <taxon>Alcaligenaceae</taxon>
        <taxon>Bordetella</taxon>
    </lineage>
</organism>
<keyword id="KW-0032">Aminotransferase</keyword>
<keyword id="KW-0808">Transferase</keyword>
<comment type="function">
    <text evidence="1">The glycine cleavage system catalyzes the degradation of glycine.</text>
</comment>
<comment type="catalytic activity">
    <reaction evidence="1">
        <text>N(6)-[(R)-S(8)-aminomethyldihydrolipoyl]-L-lysyl-[protein] + (6S)-5,6,7,8-tetrahydrofolate = N(6)-[(R)-dihydrolipoyl]-L-lysyl-[protein] + (6R)-5,10-methylene-5,6,7,8-tetrahydrofolate + NH4(+)</text>
        <dbReference type="Rhea" id="RHEA:16945"/>
        <dbReference type="Rhea" id="RHEA-COMP:10475"/>
        <dbReference type="Rhea" id="RHEA-COMP:10492"/>
        <dbReference type="ChEBI" id="CHEBI:15636"/>
        <dbReference type="ChEBI" id="CHEBI:28938"/>
        <dbReference type="ChEBI" id="CHEBI:57453"/>
        <dbReference type="ChEBI" id="CHEBI:83100"/>
        <dbReference type="ChEBI" id="CHEBI:83143"/>
        <dbReference type="EC" id="2.1.2.10"/>
    </reaction>
</comment>
<comment type="subunit">
    <text evidence="1">The glycine cleavage system is composed of four proteins: P, T, L and H.</text>
</comment>
<comment type="similarity">
    <text evidence="1">Belongs to the GcvT family.</text>
</comment>